<sequence>MQKYVCNVCGYEYDPAEHDNVPFDQLPDDWCCPVCGVSKDQFSPA</sequence>
<gene>
    <name type="primary">rd1</name>
    <name type="ordered locus">Ddes_2011</name>
</gene>
<dbReference type="EMBL" id="CP001358">
    <property type="protein sequence ID" value="ACL49907.1"/>
    <property type="molecule type" value="Genomic_DNA"/>
</dbReference>
<dbReference type="PIR" id="A00276">
    <property type="entry name" value="RUDVD"/>
</dbReference>
<dbReference type="PDB" id="6NW0">
    <property type="method" value="X-ray"/>
    <property type="resolution" value="1.85 A"/>
    <property type="chains" value="A/B=1-45"/>
</dbReference>
<dbReference type="PDB" id="6NW1">
    <property type="method" value="X-ray"/>
    <property type="resolution" value="1.86 A"/>
    <property type="chains" value="A/B=1-45"/>
</dbReference>
<dbReference type="PDB" id="6RXN">
    <property type="method" value="X-ray"/>
    <property type="resolution" value="1.50 A"/>
    <property type="chains" value="A=1-45"/>
</dbReference>
<dbReference type="PDBsum" id="6NW0"/>
<dbReference type="PDBsum" id="6NW1"/>
<dbReference type="PDBsum" id="6RXN"/>
<dbReference type="SMR" id="P04170"/>
<dbReference type="STRING" id="525146.Ddes_2011"/>
<dbReference type="KEGG" id="dds:Ddes_2011"/>
<dbReference type="eggNOG" id="COG1773">
    <property type="taxonomic scope" value="Bacteria"/>
</dbReference>
<dbReference type="HOGENOM" id="CLU_128747_4_1_7"/>
<dbReference type="EvolutionaryTrace" id="P04170"/>
<dbReference type="GO" id="GO:0005737">
    <property type="term" value="C:cytoplasm"/>
    <property type="evidence" value="ECO:0007669"/>
    <property type="project" value="UniProtKB-SubCell"/>
</dbReference>
<dbReference type="GO" id="GO:0009055">
    <property type="term" value="F:electron transfer activity"/>
    <property type="evidence" value="ECO:0007669"/>
    <property type="project" value="TreeGrafter"/>
</dbReference>
<dbReference type="GO" id="GO:0005506">
    <property type="term" value="F:iron ion binding"/>
    <property type="evidence" value="ECO:0007669"/>
    <property type="project" value="InterPro"/>
</dbReference>
<dbReference type="GO" id="GO:0043448">
    <property type="term" value="P:alkane catabolic process"/>
    <property type="evidence" value="ECO:0007669"/>
    <property type="project" value="TreeGrafter"/>
</dbReference>
<dbReference type="CDD" id="cd00730">
    <property type="entry name" value="rubredoxin"/>
    <property type="match status" value="1"/>
</dbReference>
<dbReference type="Gene3D" id="2.20.28.10">
    <property type="match status" value="1"/>
</dbReference>
<dbReference type="InterPro" id="IPR024934">
    <property type="entry name" value="Rubredoxin-like_dom"/>
</dbReference>
<dbReference type="InterPro" id="IPR024935">
    <property type="entry name" value="Rubredoxin_dom"/>
</dbReference>
<dbReference type="InterPro" id="IPR050526">
    <property type="entry name" value="Rubredoxin_ET"/>
</dbReference>
<dbReference type="InterPro" id="IPR018527">
    <property type="entry name" value="Rubredoxin_Fe_BS"/>
</dbReference>
<dbReference type="PANTHER" id="PTHR47627">
    <property type="entry name" value="RUBREDOXIN"/>
    <property type="match status" value="1"/>
</dbReference>
<dbReference type="PANTHER" id="PTHR47627:SF1">
    <property type="entry name" value="RUBREDOXIN-1-RELATED"/>
    <property type="match status" value="1"/>
</dbReference>
<dbReference type="Pfam" id="PF00301">
    <property type="entry name" value="Rubredoxin"/>
    <property type="match status" value="1"/>
</dbReference>
<dbReference type="PRINTS" id="PR00163">
    <property type="entry name" value="RUBREDOXIN"/>
</dbReference>
<dbReference type="SUPFAM" id="SSF57802">
    <property type="entry name" value="Rubredoxin-like"/>
    <property type="match status" value="1"/>
</dbReference>
<dbReference type="PROSITE" id="PS00202">
    <property type="entry name" value="RUBREDOXIN"/>
    <property type="match status" value="1"/>
</dbReference>
<dbReference type="PROSITE" id="PS50903">
    <property type="entry name" value="RUBREDOXIN_LIKE"/>
    <property type="match status" value="1"/>
</dbReference>
<keyword id="KW-0002">3D-structure</keyword>
<keyword id="KW-0963">Cytoplasm</keyword>
<keyword id="KW-0903">Direct protein sequencing</keyword>
<keyword id="KW-0249">Electron transport</keyword>
<keyword id="KW-0291">Formylation</keyword>
<keyword id="KW-0408">Iron</keyword>
<keyword id="KW-0479">Metal-binding</keyword>
<keyword id="KW-0813">Transport</keyword>
<feature type="chain" id="PRO_0000135035" description="Rubredoxin-1">
    <location>
        <begin position="1"/>
        <end position="45"/>
    </location>
</feature>
<feature type="domain" description="Rubredoxin-like" evidence="1">
    <location>
        <begin position="1"/>
        <end position="45"/>
    </location>
</feature>
<feature type="binding site" evidence="1 2">
    <location>
        <position position="6"/>
    </location>
    <ligand>
        <name>Fe cation</name>
        <dbReference type="ChEBI" id="CHEBI:24875"/>
    </ligand>
</feature>
<feature type="binding site" evidence="1 2">
    <location>
        <position position="9"/>
    </location>
    <ligand>
        <name>Fe cation</name>
        <dbReference type="ChEBI" id="CHEBI:24875"/>
    </ligand>
</feature>
<feature type="binding site" evidence="1 2">
    <location>
        <position position="32"/>
    </location>
    <ligand>
        <name>Fe cation</name>
        <dbReference type="ChEBI" id="CHEBI:24875"/>
    </ligand>
</feature>
<feature type="binding site" evidence="1 2">
    <location>
        <position position="35"/>
    </location>
    <ligand>
        <name>Fe cation</name>
        <dbReference type="ChEBI" id="CHEBI:24875"/>
    </ligand>
</feature>
<feature type="modified residue" description="N-formylmethionine" evidence="2">
    <location>
        <position position="1"/>
    </location>
</feature>
<feature type="strand" evidence="4">
    <location>
        <begin position="4"/>
        <end position="6"/>
    </location>
</feature>
<feature type="turn" evidence="4">
    <location>
        <begin position="7"/>
        <end position="9"/>
    </location>
</feature>
<feature type="helix" evidence="4">
    <location>
        <begin position="15"/>
        <end position="18"/>
    </location>
</feature>
<feature type="helix" evidence="4">
    <location>
        <begin position="23"/>
        <end position="25"/>
    </location>
</feature>
<feature type="turn" evidence="4">
    <location>
        <begin position="33"/>
        <end position="35"/>
    </location>
</feature>
<feature type="helix" evidence="4">
    <location>
        <begin position="39"/>
        <end position="41"/>
    </location>
</feature>
<feature type="strand" evidence="4">
    <location>
        <begin position="42"/>
        <end position="44"/>
    </location>
</feature>
<name>RUBR1_DESDA</name>
<evidence type="ECO:0000255" key="1">
    <source>
        <dbReference type="PROSITE-ProRule" id="PRU00241"/>
    </source>
</evidence>
<evidence type="ECO:0000269" key="2">
    <source>
    </source>
</evidence>
<evidence type="ECO:0000305" key="3"/>
<evidence type="ECO:0007829" key="4">
    <source>
        <dbReference type="PDB" id="6RXN"/>
    </source>
</evidence>
<proteinExistence type="evidence at protein level"/>
<protein>
    <recommendedName>
        <fullName>Rubredoxin-1</fullName>
        <shortName>Rd-1</shortName>
    </recommendedName>
</protein>
<accession>P04170</accession>
<accession>B8J2Y8</accession>
<comment type="function">
    <text>Rubredoxin is a small nonheme, iron protein lacking acid-labile sulfide. Its single Fe, chelated to 4 Cys, functions as an electron acceptor and may also stabilize the conformation of the molecule.</text>
</comment>
<comment type="function">
    <text>Electron acceptor for cytoplasmic lactate dehydrogenase.</text>
</comment>
<comment type="cofactor">
    <cofactor>
        <name>Fe(3+)</name>
        <dbReference type="ChEBI" id="CHEBI:29034"/>
    </cofactor>
    <text>Binds 1 Fe(3+) ion per subunit.</text>
</comment>
<comment type="subcellular location">
    <subcellularLocation>
        <location>Cytoplasm</location>
    </subcellularLocation>
</comment>
<comment type="similarity">
    <text evidence="3">Belongs to the rubredoxin family.</text>
</comment>
<organism>
    <name type="scientific">Desulfovibrio desulfuricans (strain ATCC 27774 / DSM 6949 / MB)</name>
    <dbReference type="NCBI Taxonomy" id="525146"/>
    <lineage>
        <taxon>Bacteria</taxon>
        <taxon>Pseudomonadati</taxon>
        <taxon>Thermodesulfobacteriota</taxon>
        <taxon>Desulfovibrionia</taxon>
        <taxon>Desulfovibrionales</taxon>
        <taxon>Desulfovibrionaceae</taxon>
        <taxon>Desulfovibrio</taxon>
    </lineage>
</organism>
<reference key="1">
    <citation type="journal article" date="1986" name="FEBS Lett.">
        <title>Amino acid sequence of rubredoxin from Desulfovibrio desulfuricans strain 27774.</title>
        <authorList>
            <person name="Hormel S."/>
            <person name="Walsh K.A."/>
            <person name="Prickril B.C."/>
            <person name="Titani K."/>
            <person name="Legall J."/>
            <person name="Sieker L.C."/>
        </authorList>
    </citation>
    <scope>PROTEIN SEQUENCE</scope>
    <scope>FORMYLATION AT MET-1</scope>
</reference>
<reference key="2">
    <citation type="submission" date="2009-01" db="EMBL/GenBank/DDBJ databases">
        <title>Complete sequence of Desulfovibrio desulfuricans subsp. desulfuricans str. ATCC 27774.</title>
        <authorList>
            <consortium name="US DOE Joint Genome Institute"/>
            <person name="Lucas S."/>
            <person name="Copeland A."/>
            <person name="Lapidus A."/>
            <person name="Glavina del Rio T."/>
            <person name="Tice H."/>
            <person name="Bruce D."/>
            <person name="Goodwin L."/>
            <person name="Pitluck S."/>
            <person name="Sims D."/>
            <person name="Lu M."/>
            <person name="Kiss H."/>
            <person name="Meineke L."/>
            <person name="Brettin T."/>
            <person name="Detter J.C."/>
            <person name="Han C."/>
            <person name="Larimer F."/>
            <person name="Land M."/>
            <person name="Hauser L."/>
            <person name="Kyrpides N."/>
            <person name="Ovchinnikova G."/>
            <person name="Hazen T.C."/>
        </authorList>
    </citation>
    <scope>NUCLEOTIDE SEQUENCE [LARGE SCALE GENOMIC DNA]</scope>
    <source>
        <strain>ATCC 27774 / DSM 6949 / MB</strain>
    </source>
</reference>
<reference key="3">
    <citation type="journal article" date="1986" name="FEBS Lett.">
        <title>Structure of rubredoxin from the bacterium Desulfovibrio desulfuricans.</title>
        <authorList>
            <person name="Sieker L.C."/>
            <person name="Stenkamp R.E."/>
            <person name="Jensen L.H."/>
            <person name="Prickril B.C."/>
            <person name="Legall J."/>
        </authorList>
    </citation>
    <scope>X-RAY CRYSTALLOGRAPHY (1.5 ANGSTROMS)</scope>
</reference>
<reference key="4">
    <citation type="journal article" date="1990" name="Proteins">
        <title>The structure of rubredoxin from Desulfovibrio desulfuricans strain 27774 at 1.5-A resolution.</title>
        <authorList>
            <person name="Stenkamp R.E."/>
            <person name="Sieker L.C."/>
            <person name="Jensen L.H."/>
        </authorList>
    </citation>
    <scope>X-RAY CRYSTALLOGRAPHY (1.5 ANGSTROMS)</scope>
</reference>